<sequence>MTTTNWSLKVDRGRQTWEYSQEKKEATDVDIHLLRLKEPGTHCPEGCDLNRAKTPQQAIKKAFQYFSKVQTEDGHWAGDYGGPMFLLPGLVITCYVTGYQLPESTQREIIRYLFNRQNPVDGGWGLHIEAHSDIFGTTLQYVSLRLLGVPADHPSVVKARTFLLQNGGATGIPSWGKFWLATLNAYDWNGLNPIPIEFWLLPYNLPIAPGRWWCHCRMVYLPMSYIYAKKTTGPLTDLVKDLRREIYCQEYEKINWSEQRNNISKLDMYYEHTSLLNVINGSLNAYEKVHSKWLRDKAIDYTFDHIRYEDEQTKYIDIGPVNKTVNMLCVWDREGKSPAFYKHADRLKDYLWLSFDGMKMQGYNGSQLWDTAFTIQAFMESGIANQFQDCMKLAGHYLDISQVPEDARDMKHYHRHYSKGAWPFSTVDHGWPISDCTAEGIKSALALRSLPFIEPISLDRIADGINVLLTLQNGDGGWASYENTRGPKWLEKFNPSEVFQNIMIDYSYVECSAACIQAMSAFRKHAPNHPRIKEINRSIARGVKFIKSIQRQDGSWLGSWGICFTYGTWFGIEGLVASGEPLTSPSIVKACKFLASKQRADGGWGESFKSNVTKEYVQHETSQVVNTGWALLSLMSAKYPDRECIERGIKFLIQRQYPNGDFPQESIIGVFNFNCMISYSNYKNIFPLWALSRYNQLYLKSKI</sequence>
<keyword id="KW-0413">Isomerase</keyword>
<keyword id="KW-0444">Lipid biosynthesis</keyword>
<keyword id="KW-0443">Lipid metabolism</keyword>
<keyword id="KW-1185">Reference proteome</keyword>
<keyword id="KW-0677">Repeat</keyword>
<keyword id="KW-0752">Steroid biosynthesis</keyword>
<comment type="function">
    <text>Converts oxidosqualene to cycloartenol (in vitro).</text>
</comment>
<comment type="catalytic activity">
    <reaction evidence="2">
        <text>(S)-2,3-epoxysqualene = cycloartenol</text>
        <dbReference type="Rhea" id="RHEA:21308"/>
        <dbReference type="ChEBI" id="CHEBI:15441"/>
        <dbReference type="ChEBI" id="CHEBI:17030"/>
        <dbReference type="EC" id="5.4.99.8"/>
    </reaction>
</comment>
<comment type="similarity">
    <text evidence="3">Belongs to the terpene cyclase/mutase family.</text>
</comment>
<comment type="sequence caution" evidence="3">
    <conflict type="erroneous initiation">
        <sequence resource="EMBL-CDS" id="AAF80384"/>
    </conflict>
</comment>
<protein>
    <recommendedName>
        <fullName>Cycloartenol synthase</fullName>
        <ecNumber>5.4.99.8</ecNumber>
    </recommendedName>
    <alternativeName>
        <fullName>2,3-epoxysqualene--cycloartenol cyclase</fullName>
    </alternativeName>
    <alternativeName>
        <fullName>Oxidosqualene cyclase</fullName>
    </alternativeName>
</protein>
<evidence type="ECO:0000250" key="1">
    <source>
        <dbReference type="UniProtKB" id="P48449"/>
    </source>
</evidence>
<evidence type="ECO:0000269" key="2">
    <source>
    </source>
</evidence>
<evidence type="ECO:0000305" key="3"/>
<dbReference type="EC" id="5.4.99.8"/>
<dbReference type="EMBL" id="AF159949">
    <property type="protein sequence ID" value="AAF80384.1"/>
    <property type="status" value="ALT_INIT"/>
    <property type="molecule type" value="mRNA"/>
</dbReference>
<dbReference type="EMBL" id="AAFI02000005">
    <property type="protein sequence ID" value="EAL71963.1"/>
    <property type="molecule type" value="Genomic_DNA"/>
</dbReference>
<dbReference type="RefSeq" id="XP_646246.1">
    <property type="nucleotide sequence ID" value="XM_641154.1"/>
</dbReference>
<dbReference type="SMR" id="Q55D85"/>
<dbReference type="FunCoup" id="Q55D85">
    <property type="interactions" value="48"/>
</dbReference>
<dbReference type="STRING" id="44689.Q55D85"/>
<dbReference type="PaxDb" id="44689-DDB0191311"/>
<dbReference type="EnsemblProtists" id="EAL71963">
    <property type="protein sequence ID" value="EAL71963"/>
    <property type="gene ID" value="DDB_G0269226"/>
</dbReference>
<dbReference type="GeneID" id="8617202"/>
<dbReference type="KEGG" id="ddi:DDB_G0269226"/>
<dbReference type="dictyBase" id="DDB_G0269226">
    <property type="gene designation" value="cas1"/>
</dbReference>
<dbReference type="VEuPathDB" id="AmoebaDB:DDB_G0269226"/>
<dbReference type="eggNOG" id="KOG0497">
    <property type="taxonomic scope" value="Eukaryota"/>
</dbReference>
<dbReference type="HOGENOM" id="CLU_009074_2_1_1"/>
<dbReference type="InParanoid" id="Q55D85"/>
<dbReference type="OMA" id="CWARQTI"/>
<dbReference type="PhylomeDB" id="Q55D85"/>
<dbReference type="Reactome" id="R-DDI-191273">
    <property type="pathway name" value="Cholesterol biosynthesis"/>
</dbReference>
<dbReference type="PRO" id="PR:Q55D85"/>
<dbReference type="Proteomes" id="UP000002195">
    <property type="component" value="Chromosome 1"/>
</dbReference>
<dbReference type="GO" id="GO:0005811">
    <property type="term" value="C:lipid droplet"/>
    <property type="evidence" value="ECO:0000318"/>
    <property type="project" value="GO_Central"/>
</dbReference>
<dbReference type="GO" id="GO:0016871">
    <property type="term" value="F:cycloartenol synthase activity"/>
    <property type="evidence" value="ECO:0000314"/>
    <property type="project" value="dictyBase"/>
</dbReference>
<dbReference type="GO" id="GO:0000250">
    <property type="term" value="F:lanosterol synthase activity"/>
    <property type="evidence" value="ECO:0000318"/>
    <property type="project" value="GO_Central"/>
</dbReference>
<dbReference type="GO" id="GO:0006695">
    <property type="term" value="P:cholesterol biosynthetic process"/>
    <property type="evidence" value="ECO:0000318"/>
    <property type="project" value="GO_Central"/>
</dbReference>
<dbReference type="GO" id="GO:0016126">
    <property type="term" value="P:sterol biosynthetic process"/>
    <property type="evidence" value="ECO:0000304"/>
    <property type="project" value="dictyBase"/>
</dbReference>
<dbReference type="GO" id="GO:0016104">
    <property type="term" value="P:triterpenoid biosynthetic process"/>
    <property type="evidence" value="ECO:0007669"/>
    <property type="project" value="InterPro"/>
</dbReference>
<dbReference type="CDD" id="cd02892">
    <property type="entry name" value="SQCY_1"/>
    <property type="match status" value="1"/>
</dbReference>
<dbReference type="FunFam" id="1.50.10.20:FF:000002">
    <property type="entry name" value="Terpene cyclase/mutase family member"/>
    <property type="match status" value="1"/>
</dbReference>
<dbReference type="FunFam" id="1.50.10.20:FF:000003">
    <property type="entry name" value="Terpene cyclase/mutase family member"/>
    <property type="match status" value="1"/>
</dbReference>
<dbReference type="Gene3D" id="1.50.10.20">
    <property type="match status" value="2"/>
</dbReference>
<dbReference type="InterPro" id="IPR032696">
    <property type="entry name" value="SQ_cyclase_C"/>
</dbReference>
<dbReference type="InterPro" id="IPR032697">
    <property type="entry name" value="SQ_cyclase_N"/>
</dbReference>
<dbReference type="InterPro" id="IPR018333">
    <property type="entry name" value="Squalene_cyclase"/>
</dbReference>
<dbReference type="InterPro" id="IPR002365">
    <property type="entry name" value="Terpene_synthase_CS"/>
</dbReference>
<dbReference type="InterPro" id="IPR008930">
    <property type="entry name" value="Terpenoid_cyclase/PrenylTrfase"/>
</dbReference>
<dbReference type="NCBIfam" id="TIGR01787">
    <property type="entry name" value="squalene_cyclas"/>
    <property type="match status" value="1"/>
</dbReference>
<dbReference type="PANTHER" id="PTHR11764:SF20">
    <property type="entry name" value="LANOSTEROL SYNTHASE"/>
    <property type="match status" value="1"/>
</dbReference>
<dbReference type="PANTHER" id="PTHR11764">
    <property type="entry name" value="TERPENE CYCLASE/MUTASE FAMILY MEMBER"/>
    <property type="match status" value="1"/>
</dbReference>
<dbReference type="Pfam" id="PF13243">
    <property type="entry name" value="SQHop_cyclase_C"/>
    <property type="match status" value="1"/>
</dbReference>
<dbReference type="Pfam" id="PF13249">
    <property type="entry name" value="SQHop_cyclase_N"/>
    <property type="match status" value="1"/>
</dbReference>
<dbReference type="SFLD" id="SFLDG01016">
    <property type="entry name" value="Prenyltransferase_Like_2"/>
    <property type="match status" value="1"/>
</dbReference>
<dbReference type="SUPFAM" id="SSF48239">
    <property type="entry name" value="Terpenoid cyclases/Protein prenyltransferases"/>
    <property type="match status" value="2"/>
</dbReference>
<dbReference type="PROSITE" id="PS01074">
    <property type="entry name" value="TERPENE_SYNTHASES"/>
    <property type="match status" value="1"/>
</dbReference>
<organism>
    <name type="scientific">Dictyostelium discoideum</name>
    <name type="common">Social amoeba</name>
    <dbReference type="NCBI Taxonomy" id="44689"/>
    <lineage>
        <taxon>Eukaryota</taxon>
        <taxon>Amoebozoa</taxon>
        <taxon>Evosea</taxon>
        <taxon>Eumycetozoa</taxon>
        <taxon>Dictyostelia</taxon>
        <taxon>Dictyosteliales</taxon>
        <taxon>Dictyosteliaceae</taxon>
        <taxon>Dictyostelium</taxon>
    </lineage>
</organism>
<reference key="1">
    <citation type="journal article" date="2000" name="Lipids">
        <title>Cloning and characterization of the Dictyostelium discoideum cycloartenol synthase cDNA.</title>
        <authorList>
            <person name="Godzina S.M."/>
            <person name="Lovato M.A."/>
            <person name="Meyer M.M."/>
            <person name="Foster K.A."/>
            <person name="Wilson W.K."/>
            <person name="Gu W."/>
            <person name="de Hostos E.L."/>
            <person name="Matsuda S.P.T."/>
        </authorList>
    </citation>
    <scope>NUCLEOTIDE SEQUENCE [MRNA]</scope>
    <scope>CATALYTIC ACTIVITY</scope>
</reference>
<reference key="2">
    <citation type="journal article" date="2005" name="Nature">
        <title>The genome of the social amoeba Dictyostelium discoideum.</title>
        <authorList>
            <person name="Eichinger L."/>
            <person name="Pachebat J.A."/>
            <person name="Gloeckner G."/>
            <person name="Rajandream M.A."/>
            <person name="Sucgang R."/>
            <person name="Berriman M."/>
            <person name="Song J."/>
            <person name="Olsen R."/>
            <person name="Szafranski K."/>
            <person name="Xu Q."/>
            <person name="Tunggal B."/>
            <person name="Kummerfeld S."/>
            <person name="Madera M."/>
            <person name="Konfortov B.A."/>
            <person name="Rivero F."/>
            <person name="Bankier A.T."/>
            <person name="Lehmann R."/>
            <person name="Hamlin N."/>
            <person name="Davies R."/>
            <person name="Gaudet P."/>
            <person name="Fey P."/>
            <person name="Pilcher K."/>
            <person name="Chen G."/>
            <person name="Saunders D."/>
            <person name="Sodergren E.J."/>
            <person name="Davis P."/>
            <person name="Kerhornou A."/>
            <person name="Nie X."/>
            <person name="Hall N."/>
            <person name="Anjard C."/>
            <person name="Hemphill L."/>
            <person name="Bason N."/>
            <person name="Farbrother P."/>
            <person name="Desany B."/>
            <person name="Just E."/>
            <person name="Morio T."/>
            <person name="Rost R."/>
            <person name="Churcher C.M."/>
            <person name="Cooper J."/>
            <person name="Haydock S."/>
            <person name="van Driessche N."/>
            <person name="Cronin A."/>
            <person name="Goodhead I."/>
            <person name="Muzny D.M."/>
            <person name="Mourier T."/>
            <person name="Pain A."/>
            <person name="Lu M."/>
            <person name="Harper D."/>
            <person name="Lindsay R."/>
            <person name="Hauser H."/>
            <person name="James K.D."/>
            <person name="Quiles M."/>
            <person name="Madan Babu M."/>
            <person name="Saito T."/>
            <person name="Buchrieser C."/>
            <person name="Wardroper A."/>
            <person name="Felder M."/>
            <person name="Thangavelu M."/>
            <person name="Johnson D."/>
            <person name="Knights A."/>
            <person name="Loulseged H."/>
            <person name="Mungall K.L."/>
            <person name="Oliver K."/>
            <person name="Price C."/>
            <person name="Quail M.A."/>
            <person name="Urushihara H."/>
            <person name="Hernandez J."/>
            <person name="Rabbinowitsch E."/>
            <person name="Steffen D."/>
            <person name="Sanders M."/>
            <person name="Ma J."/>
            <person name="Kohara Y."/>
            <person name="Sharp S."/>
            <person name="Simmonds M.N."/>
            <person name="Spiegler S."/>
            <person name="Tivey A."/>
            <person name="Sugano S."/>
            <person name="White B."/>
            <person name="Walker D."/>
            <person name="Woodward J.R."/>
            <person name="Winckler T."/>
            <person name="Tanaka Y."/>
            <person name="Shaulsky G."/>
            <person name="Schleicher M."/>
            <person name="Weinstock G.M."/>
            <person name="Rosenthal A."/>
            <person name="Cox E.C."/>
            <person name="Chisholm R.L."/>
            <person name="Gibbs R.A."/>
            <person name="Loomis W.F."/>
            <person name="Platzer M."/>
            <person name="Kay R.R."/>
            <person name="Williams J.G."/>
            <person name="Dear P.H."/>
            <person name="Noegel A.A."/>
            <person name="Barrell B.G."/>
            <person name="Kuspa A."/>
        </authorList>
    </citation>
    <scope>NUCLEOTIDE SEQUENCE [LARGE SCALE GENOMIC DNA]</scope>
    <source>
        <strain>AX4</strain>
    </source>
</reference>
<name>CAS1_DICDI</name>
<gene>
    <name type="primary">cas1</name>
    <name type="ORF">DDB_G0269226</name>
</gene>
<feature type="chain" id="PRO_0000327386" description="Cycloartenol synthase">
    <location>
        <begin position="1"/>
        <end position="703"/>
    </location>
</feature>
<feature type="repeat" description="PFTB 1">
    <location>
        <begin position="59"/>
        <end position="103"/>
    </location>
</feature>
<feature type="repeat" description="PFTB 2">
    <location>
        <begin position="106"/>
        <end position="148"/>
    </location>
</feature>
<feature type="repeat" description="PFTB 3">
    <location>
        <begin position="461"/>
        <end position="503"/>
    </location>
</feature>
<feature type="repeat" description="PFTB 4">
    <location>
        <begin position="539"/>
        <end position="579"/>
    </location>
</feature>
<feature type="repeat" description="PFTB 5">
    <location>
        <begin position="587"/>
        <end position="628"/>
    </location>
</feature>
<feature type="repeat" description="PFTB 6">
    <location>
        <begin position="645"/>
        <end position="686"/>
    </location>
</feature>
<feature type="active site" description="Proton donor" evidence="1">
    <location>
        <position position="435"/>
    </location>
</feature>
<proteinExistence type="evidence at protein level"/>
<accession>Q55D85</accession>
<accession>Q9NDE9</accession>